<keyword id="KW-0961">Cell wall biogenesis/degradation</keyword>
<keyword id="KW-0378">Hydrolase</keyword>
<keyword id="KW-0479">Metal-binding</keyword>
<keyword id="KW-0482">Metalloprotease</keyword>
<keyword id="KW-0645">Protease</keyword>
<keyword id="KW-1185">Reference proteome</keyword>
<keyword id="KW-0732">Signal</keyword>
<keyword id="KW-0862">Zinc</keyword>
<feature type="signal peptide" description="Tat-type signal" evidence="2">
    <location>
        <begin position="1"/>
        <end position="30"/>
    </location>
</feature>
<feature type="chain" id="PRO_0000168773" description="Peptidoglycan L,D-endopeptidase MepK">
    <location>
        <begin position="31"/>
        <end position="182"/>
    </location>
</feature>
<feature type="binding site" evidence="1">
    <location>
        <position position="133"/>
    </location>
    <ligand>
        <name>Zn(2+)</name>
        <dbReference type="ChEBI" id="CHEBI:29105"/>
        <note>catalytic</note>
    </ligand>
</feature>
<feature type="binding site" evidence="1">
    <location>
        <position position="140"/>
    </location>
    <ligand>
        <name>Zn(2+)</name>
        <dbReference type="ChEBI" id="CHEBI:29105"/>
        <note>catalytic</note>
    </ligand>
</feature>
<feature type="binding site" evidence="1">
    <location>
        <position position="173"/>
    </location>
    <ligand>
        <name>Zn(2+)</name>
        <dbReference type="ChEBI" id="CHEBI:29105"/>
        <note>catalytic</note>
    </ligand>
</feature>
<feature type="mutagenesis site" description="Loss of activity." evidence="4">
    <original>H</original>
    <variation>A</variation>
    <location>
        <position position="133"/>
    </location>
</feature>
<feature type="mutagenesis site" description="Loss of activity." evidence="4">
    <original>D</original>
    <variation>A</variation>
    <location>
        <position position="140"/>
    </location>
</feature>
<feature type="mutagenesis site" description="Loss of activity." evidence="4">
    <original>H</original>
    <variation>A</variation>
    <location>
        <position position="173"/>
    </location>
</feature>
<proteinExistence type="evidence at protein level"/>
<sequence>MDKFDANRRKLLALGGVALGAAILPTPAFATLSTPRPRILTLNNLHTGESIKAEFFDGRGYIQEELAKLNHFFRDYRANKIKSIDPGLFDQLYRLQGLLGTRKPVQLISGYRSIDTNNELRARSRGVAKKSYHTKGQAMDFHIEGIALSNIRKAALSMRAGGVGYYPRSNFVHIDTGPARHW</sequence>
<accession>P0AB06</accession>
<accession>P75848</accession>
<dbReference type="EC" id="3.4.-.-" evidence="4"/>
<dbReference type="EMBL" id="U00096">
    <property type="protein sequence ID" value="AAC74012.1"/>
    <property type="molecule type" value="Genomic_DNA"/>
</dbReference>
<dbReference type="EMBL" id="AP009048">
    <property type="protein sequence ID" value="BAA35672.1"/>
    <property type="molecule type" value="Genomic_DNA"/>
</dbReference>
<dbReference type="PIR" id="E64832">
    <property type="entry name" value="E64832"/>
</dbReference>
<dbReference type="RefSeq" id="NP_415446.1">
    <property type="nucleotide sequence ID" value="NC_000913.3"/>
</dbReference>
<dbReference type="RefSeq" id="WP_001295932.1">
    <property type="nucleotide sequence ID" value="NZ_STEB01000006.1"/>
</dbReference>
<dbReference type="BioGRID" id="4260016">
    <property type="interactions" value="20"/>
</dbReference>
<dbReference type="FunCoup" id="P0AB06">
    <property type="interactions" value="30"/>
</dbReference>
<dbReference type="IntAct" id="P0AB06">
    <property type="interactions" value="9"/>
</dbReference>
<dbReference type="STRING" id="511145.b0926"/>
<dbReference type="PaxDb" id="511145-b0926"/>
<dbReference type="EnsemblBacteria" id="AAC74012">
    <property type="protein sequence ID" value="AAC74012"/>
    <property type="gene ID" value="b0926"/>
</dbReference>
<dbReference type="GeneID" id="945538"/>
<dbReference type="KEGG" id="ecj:JW0909"/>
<dbReference type="KEGG" id="eco:b0926"/>
<dbReference type="KEGG" id="ecoc:C3026_05690"/>
<dbReference type="PATRIC" id="fig|511145.12.peg.957"/>
<dbReference type="EchoBASE" id="EB3467"/>
<dbReference type="eggNOG" id="COG3108">
    <property type="taxonomic scope" value="Bacteria"/>
</dbReference>
<dbReference type="HOGENOM" id="CLU_080400_1_2_6"/>
<dbReference type="InParanoid" id="P0AB06"/>
<dbReference type="OMA" id="KSYHMKG"/>
<dbReference type="OrthoDB" id="9782994at2"/>
<dbReference type="PhylomeDB" id="P0AB06"/>
<dbReference type="BioCyc" id="EcoCyc:G6474-MONOMER"/>
<dbReference type="BioCyc" id="MetaCyc:G6474-MONOMER"/>
<dbReference type="UniPathway" id="UPA00963"/>
<dbReference type="PHI-base" id="PHI:11001"/>
<dbReference type="PRO" id="PR:P0AB06"/>
<dbReference type="Proteomes" id="UP000000625">
    <property type="component" value="Chromosome"/>
</dbReference>
<dbReference type="GO" id="GO:0030288">
    <property type="term" value="C:outer membrane-bounded periplasmic space"/>
    <property type="evidence" value="ECO:0000314"/>
    <property type="project" value="EcoCyc"/>
</dbReference>
<dbReference type="GO" id="GO:0004175">
    <property type="term" value="F:endopeptidase activity"/>
    <property type="evidence" value="ECO:0000314"/>
    <property type="project" value="EcoCyc"/>
</dbReference>
<dbReference type="GO" id="GO:0009254">
    <property type="term" value="P:peptidoglycan turnover"/>
    <property type="evidence" value="ECO:0000315"/>
    <property type="project" value="EcoCyc"/>
</dbReference>
<dbReference type="CDD" id="cd14844">
    <property type="entry name" value="Zn-DD-carboxypeptidase_like"/>
    <property type="match status" value="1"/>
</dbReference>
<dbReference type="Gene3D" id="3.30.1380.10">
    <property type="match status" value="1"/>
</dbReference>
<dbReference type="InterPro" id="IPR010275">
    <property type="entry name" value="DUF882"/>
</dbReference>
<dbReference type="InterPro" id="IPR009045">
    <property type="entry name" value="Hedgehog_sig/DD-Pept_Zn-bd_sf"/>
</dbReference>
<dbReference type="InterPro" id="IPR006311">
    <property type="entry name" value="TAT_signal"/>
</dbReference>
<dbReference type="PANTHER" id="PTHR37425">
    <property type="match status" value="1"/>
</dbReference>
<dbReference type="PANTHER" id="PTHR37425:SF1">
    <property type="entry name" value="OUTER MEMBRANE PROTEIN"/>
    <property type="match status" value="1"/>
</dbReference>
<dbReference type="Pfam" id="PF05951">
    <property type="entry name" value="Peptidase_M15_2"/>
    <property type="match status" value="1"/>
</dbReference>
<dbReference type="SUPFAM" id="SSF55166">
    <property type="entry name" value="Hedgehog/DD-peptidase"/>
    <property type="match status" value="1"/>
</dbReference>
<dbReference type="PROSITE" id="PS51318">
    <property type="entry name" value="TAT"/>
    <property type="match status" value="1"/>
</dbReference>
<comment type="function">
    <text evidence="4">L,D-endopeptidase that cleaves meso-diaminopimelic acid (mDAP)-mDAP cross-links in peptidoglycan (PubMed:30940749). It works in conjunction with other elongation-specific D,D-endopeptidases to make space for efficient incorporation of nascent peptidoglycan strands into the sacculus and thus enable cell wall expansion (PubMed:30940749). In vitro, is able to cleave the mDAP cross-links of soluble muropeptides and of intact peptidoglycan sacculi (PubMed:30940749). Shows a weak D,D-endopeptidase activity (PubMed:30940749).</text>
</comment>
<comment type="cofactor">
    <cofactor evidence="1">
        <name>Zn(2+)</name>
        <dbReference type="ChEBI" id="CHEBI:29105"/>
    </cofactor>
    <text evidence="1">Binds 1 zinc ion per subunit.</text>
</comment>
<comment type="pathway">
    <text evidence="7">Cell wall biogenesis; cell wall polysaccharide biosynthesis.</text>
</comment>
<comment type="PTM">
    <text evidence="2 3">Exported by the Tat system (PubMed:17218314). The position of the signal peptide cleavage has not been experimentally proven (By similarity).</text>
</comment>
<comment type="disruption phenotype">
    <text evidence="4">The deletion mutant does not exhibit any discernible phenotype except a moderate increase in sensitivity to certain beta-lactam antibiotics such as ampicillin and cephalexin (PubMed:30940749). A double mepS-mepK deletion mutant bulges and lyses in low-osmolarity conditions (PubMed:30940749). A triple mepS-mepH-mepK deletion mutant grows very poorly with extensive lysis and cell death (PubMed:30940749).</text>
</comment>
<comment type="similarity">
    <text evidence="6">Belongs to the peptidase M15 family.</text>
</comment>
<organism>
    <name type="scientific">Escherichia coli (strain K12)</name>
    <dbReference type="NCBI Taxonomy" id="83333"/>
    <lineage>
        <taxon>Bacteria</taxon>
        <taxon>Pseudomonadati</taxon>
        <taxon>Pseudomonadota</taxon>
        <taxon>Gammaproteobacteria</taxon>
        <taxon>Enterobacterales</taxon>
        <taxon>Enterobacteriaceae</taxon>
        <taxon>Escherichia</taxon>
    </lineage>
</organism>
<name>MEPK_ECOLI</name>
<gene>
    <name evidence="5" type="primary">mepK</name>
    <name type="synonym">ycbK</name>
    <name type="ordered locus">b0926</name>
    <name type="ordered locus">JW0909</name>
</gene>
<reference key="1">
    <citation type="journal article" date="1996" name="DNA Res.">
        <title>A 718-kb DNA sequence of the Escherichia coli K-12 genome corresponding to the 12.7-28.0 min region on the linkage map.</title>
        <authorList>
            <person name="Oshima T."/>
            <person name="Aiba H."/>
            <person name="Baba T."/>
            <person name="Fujita K."/>
            <person name="Hayashi K."/>
            <person name="Honjo A."/>
            <person name="Ikemoto K."/>
            <person name="Inada T."/>
            <person name="Itoh T."/>
            <person name="Kajihara M."/>
            <person name="Kanai K."/>
            <person name="Kashimoto K."/>
            <person name="Kimura S."/>
            <person name="Kitagawa M."/>
            <person name="Makino K."/>
            <person name="Masuda S."/>
            <person name="Miki T."/>
            <person name="Mizobuchi K."/>
            <person name="Mori H."/>
            <person name="Motomura K."/>
            <person name="Nakamura Y."/>
            <person name="Nashimoto H."/>
            <person name="Nishio Y."/>
            <person name="Saito N."/>
            <person name="Sampei G."/>
            <person name="Seki Y."/>
            <person name="Tagami H."/>
            <person name="Takemoto K."/>
            <person name="Wada C."/>
            <person name="Yamamoto Y."/>
            <person name="Yano M."/>
            <person name="Horiuchi T."/>
        </authorList>
    </citation>
    <scope>NUCLEOTIDE SEQUENCE [LARGE SCALE GENOMIC DNA]</scope>
    <source>
        <strain>K12 / W3110 / ATCC 27325 / DSM 5911</strain>
    </source>
</reference>
<reference key="2">
    <citation type="journal article" date="1997" name="Science">
        <title>The complete genome sequence of Escherichia coli K-12.</title>
        <authorList>
            <person name="Blattner F.R."/>
            <person name="Plunkett G. III"/>
            <person name="Bloch C.A."/>
            <person name="Perna N.T."/>
            <person name="Burland V."/>
            <person name="Riley M."/>
            <person name="Collado-Vides J."/>
            <person name="Glasner J.D."/>
            <person name="Rode C.K."/>
            <person name="Mayhew G.F."/>
            <person name="Gregor J."/>
            <person name="Davis N.W."/>
            <person name="Kirkpatrick H.A."/>
            <person name="Goeden M.A."/>
            <person name="Rose D.J."/>
            <person name="Mau B."/>
            <person name="Shao Y."/>
        </authorList>
    </citation>
    <scope>NUCLEOTIDE SEQUENCE [LARGE SCALE GENOMIC DNA]</scope>
    <source>
        <strain>K12 / MG1655 / ATCC 47076</strain>
    </source>
</reference>
<reference key="3">
    <citation type="journal article" date="2006" name="Mol. Syst. Biol.">
        <title>Highly accurate genome sequences of Escherichia coli K-12 strains MG1655 and W3110.</title>
        <authorList>
            <person name="Hayashi K."/>
            <person name="Morooka N."/>
            <person name="Yamamoto Y."/>
            <person name="Fujita K."/>
            <person name="Isono K."/>
            <person name="Choi S."/>
            <person name="Ohtsubo E."/>
            <person name="Baba T."/>
            <person name="Wanner B.L."/>
            <person name="Mori H."/>
            <person name="Horiuchi T."/>
        </authorList>
    </citation>
    <scope>NUCLEOTIDE SEQUENCE [LARGE SCALE GENOMIC DNA]</scope>
    <source>
        <strain>K12 / W3110 / ATCC 27325 / DSM 5911</strain>
    </source>
</reference>
<reference key="4">
    <citation type="journal article" date="2007" name="J. Biol. Chem.">
        <title>Export pathway selectivity of Escherichia coli twin arginine translocation signal peptides.</title>
        <authorList>
            <person name="Tullman-Ercek D."/>
            <person name="DeLisa M.P."/>
            <person name="Kawarasaki Y."/>
            <person name="Iranpour P."/>
            <person name="Ribnicky B."/>
            <person name="Palmer T."/>
            <person name="Georgiou G."/>
        </authorList>
    </citation>
    <scope>EXPORT VIA THE TAT-SYSTEM</scope>
</reference>
<reference key="5">
    <citation type="journal article" date="2019" name="Proc. Natl. Acad. Sci. U.S.A.">
        <title>Peptidoglycan hydrolase of an unusual cross-link cleavage specificity contributes to bacterial cell wall synthesis.</title>
        <authorList>
            <person name="Chodisetti P.K."/>
            <person name="Reddy M."/>
        </authorList>
    </citation>
    <scope>FUNCTION AS AN ENDOPEPTIDASE</scope>
    <scope>DISRUPTION PHENOTYPE</scope>
    <scope>MUTAGENESIS OF HIS-133; ASP-140 AND HIS-173</scope>
</reference>
<protein>
    <recommendedName>
        <fullName evidence="6">Peptidoglycan L,D-endopeptidase MepK</fullName>
        <ecNumber evidence="4">3.4.-.-</ecNumber>
    </recommendedName>
    <alternativeName>
        <fullName evidence="5">Murein endopeptidase K</fullName>
    </alternativeName>
</protein>
<evidence type="ECO:0000250" key="1">
    <source>
        <dbReference type="UniProtKB" id="Q06241"/>
    </source>
</evidence>
<evidence type="ECO:0000255" key="2">
    <source>
        <dbReference type="PROSITE-ProRule" id="PRU00648"/>
    </source>
</evidence>
<evidence type="ECO:0000269" key="3">
    <source>
    </source>
</evidence>
<evidence type="ECO:0000269" key="4">
    <source>
    </source>
</evidence>
<evidence type="ECO:0000303" key="5">
    <source>
    </source>
</evidence>
<evidence type="ECO:0000305" key="6"/>
<evidence type="ECO:0000305" key="7">
    <source>
    </source>
</evidence>